<comment type="function">
    <text evidence="1">Produces ATP from ADP in the presence of a proton gradient across the membrane. The alpha chain is a regulatory subunit.</text>
</comment>
<comment type="catalytic activity">
    <reaction evidence="1">
        <text>ATP + H2O + 4 H(+)(in) = ADP + phosphate + 5 H(+)(out)</text>
        <dbReference type="Rhea" id="RHEA:57720"/>
        <dbReference type="ChEBI" id="CHEBI:15377"/>
        <dbReference type="ChEBI" id="CHEBI:15378"/>
        <dbReference type="ChEBI" id="CHEBI:30616"/>
        <dbReference type="ChEBI" id="CHEBI:43474"/>
        <dbReference type="ChEBI" id="CHEBI:456216"/>
        <dbReference type="EC" id="7.1.2.2"/>
    </reaction>
</comment>
<comment type="subunit">
    <text evidence="1">F-type ATPases have 2 components, CF(1) - the catalytic core - and CF(0) - the membrane proton channel. CF(1) has five subunits: alpha(3), beta(3), gamma(1), delta(1), epsilon(1). CF(0) has three main subunits: a(1), b(2) and c(9-12). The alpha and beta chains form an alternating ring which encloses part of the gamma chain. CF(1) is attached to CF(0) by a central stalk formed by the gamma and epsilon chains, while a peripheral stalk is formed by the delta and b chains.</text>
</comment>
<comment type="subcellular location">
    <subcellularLocation>
        <location evidence="1">Cell membrane</location>
        <topology evidence="1">Peripheral membrane protein</topology>
    </subcellularLocation>
</comment>
<comment type="similarity">
    <text evidence="1">Belongs to the ATPase alpha/beta chains family.</text>
</comment>
<name>ATPA_SALTO</name>
<feature type="chain" id="PRO_1000086893" description="ATP synthase subunit alpha">
    <location>
        <begin position="1"/>
        <end position="550"/>
    </location>
</feature>
<feature type="region of interest" description="Disordered" evidence="2">
    <location>
        <begin position="521"/>
        <end position="550"/>
    </location>
</feature>
<feature type="compositionally biased region" description="Basic and acidic residues" evidence="2">
    <location>
        <begin position="534"/>
        <end position="550"/>
    </location>
</feature>
<feature type="binding site" evidence="1">
    <location>
        <begin position="172"/>
        <end position="179"/>
    </location>
    <ligand>
        <name>ATP</name>
        <dbReference type="ChEBI" id="CHEBI:30616"/>
    </ligand>
</feature>
<feature type="site" description="Required for activity" evidence="1">
    <location>
        <position position="373"/>
    </location>
</feature>
<evidence type="ECO:0000255" key="1">
    <source>
        <dbReference type="HAMAP-Rule" id="MF_01346"/>
    </source>
</evidence>
<evidence type="ECO:0000256" key="2">
    <source>
        <dbReference type="SAM" id="MobiDB-lite"/>
    </source>
</evidence>
<reference key="1">
    <citation type="journal article" date="2007" name="Proc. Natl. Acad. Sci. U.S.A.">
        <title>Genome sequencing reveals complex secondary metabolome in the marine actinomycete Salinispora tropica.</title>
        <authorList>
            <person name="Udwary D.W."/>
            <person name="Zeigler L."/>
            <person name="Asolkar R.N."/>
            <person name="Singan V."/>
            <person name="Lapidus A."/>
            <person name="Fenical W."/>
            <person name="Jensen P.R."/>
            <person name="Moore B.S."/>
        </authorList>
    </citation>
    <scope>NUCLEOTIDE SEQUENCE [LARGE SCALE GENOMIC DNA]</scope>
    <source>
        <strain>ATCC BAA-916 / DSM 44818 / JCM 13857 / NBRC 105044 / CNB-440</strain>
    </source>
</reference>
<organism>
    <name type="scientific">Salinispora tropica (strain ATCC BAA-916 / DSM 44818 / JCM 13857 / NBRC 105044 / CNB-440)</name>
    <dbReference type="NCBI Taxonomy" id="369723"/>
    <lineage>
        <taxon>Bacteria</taxon>
        <taxon>Bacillati</taxon>
        <taxon>Actinomycetota</taxon>
        <taxon>Actinomycetes</taxon>
        <taxon>Micromonosporales</taxon>
        <taxon>Micromonosporaceae</taxon>
        <taxon>Salinispora</taxon>
    </lineage>
</organism>
<protein>
    <recommendedName>
        <fullName evidence="1">ATP synthase subunit alpha</fullName>
        <ecNumber evidence="1">7.1.2.2</ecNumber>
    </recommendedName>
    <alternativeName>
        <fullName evidence="1">ATP synthase F1 sector subunit alpha</fullName>
    </alternativeName>
    <alternativeName>
        <fullName evidence="1">F-ATPase subunit alpha</fullName>
    </alternativeName>
</protein>
<dbReference type="EC" id="7.1.2.2" evidence="1"/>
<dbReference type="EMBL" id="CP000667">
    <property type="protein sequence ID" value="ABP56063.1"/>
    <property type="molecule type" value="Genomic_DNA"/>
</dbReference>
<dbReference type="RefSeq" id="WP_012014838.1">
    <property type="nucleotide sequence ID" value="NC_009380.1"/>
</dbReference>
<dbReference type="SMR" id="A4XAW4"/>
<dbReference type="STRING" id="369723.Strop_3632"/>
<dbReference type="KEGG" id="stp:Strop_3632"/>
<dbReference type="PATRIC" id="fig|369723.5.peg.3747"/>
<dbReference type="eggNOG" id="COG0056">
    <property type="taxonomic scope" value="Bacteria"/>
</dbReference>
<dbReference type="HOGENOM" id="CLU_010091_2_1_11"/>
<dbReference type="Proteomes" id="UP000000235">
    <property type="component" value="Chromosome"/>
</dbReference>
<dbReference type="GO" id="GO:0005886">
    <property type="term" value="C:plasma membrane"/>
    <property type="evidence" value="ECO:0007669"/>
    <property type="project" value="UniProtKB-SubCell"/>
</dbReference>
<dbReference type="GO" id="GO:0045259">
    <property type="term" value="C:proton-transporting ATP synthase complex"/>
    <property type="evidence" value="ECO:0007669"/>
    <property type="project" value="UniProtKB-KW"/>
</dbReference>
<dbReference type="GO" id="GO:0043531">
    <property type="term" value="F:ADP binding"/>
    <property type="evidence" value="ECO:0007669"/>
    <property type="project" value="TreeGrafter"/>
</dbReference>
<dbReference type="GO" id="GO:0005524">
    <property type="term" value="F:ATP binding"/>
    <property type="evidence" value="ECO:0007669"/>
    <property type="project" value="UniProtKB-UniRule"/>
</dbReference>
<dbReference type="GO" id="GO:0046933">
    <property type="term" value="F:proton-transporting ATP synthase activity, rotational mechanism"/>
    <property type="evidence" value="ECO:0007669"/>
    <property type="project" value="UniProtKB-UniRule"/>
</dbReference>
<dbReference type="CDD" id="cd18113">
    <property type="entry name" value="ATP-synt_F1_alpha_C"/>
    <property type="match status" value="1"/>
</dbReference>
<dbReference type="CDD" id="cd18116">
    <property type="entry name" value="ATP-synt_F1_alpha_N"/>
    <property type="match status" value="1"/>
</dbReference>
<dbReference type="CDD" id="cd01132">
    <property type="entry name" value="F1-ATPase_alpha_CD"/>
    <property type="match status" value="1"/>
</dbReference>
<dbReference type="FunFam" id="1.20.150.20:FF:000001">
    <property type="entry name" value="ATP synthase subunit alpha"/>
    <property type="match status" value="1"/>
</dbReference>
<dbReference type="FunFam" id="3.40.50.300:FF:000002">
    <property type="entry name" value="ATP synthase subunit alpha"/>
    <property type="match status" value="1"/>
</dbReference>
<dbReference type="Gene3D" id="2.40.30.20">
    <property type="match status" value="1"/>
</dbReference>
<dbReference type="Gene3D" id="1.20.150.20">
    <property type="entry name" value="ATP synthase alpha/beta chain, C-terminal domain"/>
    <property type="match status" value="1"/>
</dbReference>
<dbReference type="Gene3D" id="3.40.50.300">
    <property type="entry name" value="P-loop containing nucleotide triphosphate hydrolases"/>
    <property type="match status" value="1"/>
</dbReference>
<dbReference type="HAMAP" id="MF_01346">
    <property type="entry name" value="ATP_synth_alpha_bact"/>
    <property type="match status" value="1"/>
</dbReference>
<dbReference type="InterPro" id="IPR023366">
    <property type="entry name" value="ATP_synth_asu-like_sf"/>
</dbReference>
<dbReference type="InterPro" id="IPR000793">
    <property type="entry name" value="ATP_synth_asu_C"/>
</dbReference>
<dbReference type="InterPro" id="IPR038376">
    <property type="entry name" value="ATP_synth_asu_C_sf"/>
</dbReference>
<dbReference type="InterPro" id="IPR033732">
    <property type="entry name" value="ATP_synth_F1_a_nt-bd_dom"/>
</dbReference>
<dbReference type="InterPro" id="IPR005294">
    <property type="entry name" value="ATP_synth_F1_asu"/>
</dbReference>
<dbReference type="InterPro" id="IPR020003">
    <property type="entry name" value="ATPase_a/bsu_AS"/>
</dbReference>
<dbReference type="InterPro" id="IPR004100">
    <property type="entry name" value="ATPase_F1/V1/A1_a/bsu_N"/>
</dbReference>
<dbReference type="InterPro" id="IPR036121">
    <property type="entry name" value="ATPase_F1/V1/A1_a/bsu_N_sf"/>
</dbReference>
<dbReference type="InterPro" id="IPR000194">
    <property type="entry name" value="ATPase_F1/V1/A1_a/bsu_nucl-bd"/>
</dbReference>
<dbReference type="InterPro" id="IPR027417">
    <property type="entry name" value="P-loop_NTPase"/>
</dbReference>
<dbReference type="NCBIfam" id="TIGR00962">
    <property type="entry name" value="atpA"/>
    <property type="match status" value="1"/>
</dbReference>
<dbReference type="NCBIfam" id="NF009884">
    <property type="entry name" value="PRK13343.1"/>
    <property type="match status" value="1"/>
</dbReference>
<dbReference type="PANTHER" id="PTHR48082">
    <property type="entry name" value="ATP SYNTHASE SUBUNIT ALPHA, MITOCHONDRIAL"/>
    <property type="match status" value="1"/>
</dbReference>
<dbReference type="PANTHER" id="PTHR48082:SF2">
    <property type="entry name" value="ATP SYNTHASE SUBUNIT ALPHA, MITOCHONDRIAL"/>
    <property type="match status" value="1"/>
</dbReference>
<dbReference type="Pfam" id="PF00006">
    <property type="entry name" value="ATP-synt_ab"/>
    <property type="match status" value="1"/>
</dbReference>
<dbReference type="Pfam" id="PF00306">
    <property type="entry name" value="ATP-synt_ab_C"/>
    <property type="match status" value="1"/>
</dbReference>
<dbReference type="Pfam" id="PF02874">
    <property type="entry name" value="ATP-synt_ab_N"/>
    <property type="match status" value="1"/>
</dbReference>
<dbReference type="SUPFAM" id="SSF47917">
    <property type="entry name" value="C-terminal domain of alpha and beta subunits of F1 ATP synthase"/>
    <property type="match status" value="1"/>
</dbReference>
<dbReference type="SUPFAM" id="SSF50615">
    <property type="entry name" value="N-terminal domain of alpha and beta subunits of F1 ATP synthase"/>
    <property type="match status" value="1"/>
</dbReference>
<dbReference type="SUPFAM" id="SSF52540">
    <property type="entry name" value="P-loop containing nucleoside triphosphate hydrolases"/>
    <property type="match status" value="1"/>
</dbReference>
<dbReference type="PROSITE" id="PS00152">
    <property type="entry name" value="ATPASE_ALPHA_BETA"/>
    <property type="match status" value="1"/>
</dbReference>
<accession>A4XAW4</accession>
<sequence length="550" mass="59514">MAELTISTEEIRGALERYVSSYSADVSREEVGTVADAGDGIAHVEGLPSTMTNELLEFEDGTIGVALNLDVREIGVVVLGDFAGIEEGQRVKRTGRVLSAPVGDAFLGRVVNALGEPIDGLGDIPNEGFRELELQAPNVMSRKSVDEPLQTGIKAIDAMTPIGRGQRQLIIGDRKTGKTTVALDTILNQRDNWRSGDPKKQVRCIYVAVGQKASTIASIKGVLEEAGAMEYTTIVASPASDPAGFKYLAPYTGSSIGQHWMYGGKHVLIVFDDLSKQAEAYRAVSLLLRRPPGREAYPGDVFYLHSRLLERCAKLSDEMGGGSMTGLPIIETKANDISAFIPTNVISITDGQIFLETDLFNQGVRPAINVGTSVSRVGGSAQVKPMKKVSGSLRLNLAQYRELEAFAAFASDLDKASRAQLERGSRLVELLKQPNYTPFPVQDQVVLVWAGVEGKLDDIPVGEIGRFESEFLQYLRHKHEGVLAQIAGGTWGDEVIASLDAAISDFKKLFLGKEDELRINEPAAEPLAGEEDRETVTRFHDDATDRPAGS</sequence>
<proteinExistence type="inferred from homology"/>
<gene>
    <name evidence="1" type="primary">atpA</name>
    <name type="ordered locus">Strop_3632</name>
</gene>
<keyword id="KW-0066">ATP synthesis</keyword>
<keyword id="KW-0067">ATP-binding</keyword>
<keyword id="KW-1003">Cell membrane</keyword>
<keyword id="KW-0139">CF(1)</keyword>
<keyword id="KW-0375">Hydrogen ion transport</keyword>
<keyword id="KW-0406">Ion transport</keyword>
<keyword id="KW-0472">Membrane</keyword>
<keyword id="KW-0547">Nucleotide-binding</keyword>
<keyword id="KW-1185">Reference proteome</keyword>
<keyword id="KW-1278">Translocase</keyword>
<keyword id="KW-0813">Transport</keyword>